<organism>
    <name type="scientific">Anaplasma marginale (strain Florida)</name>
    <dbReference type="NCBI Taxonomy" id="320483"/>
    <lineage>
        <taxon>Bacteria</taxon>
        <taxon>Pseudomonadati</taxon>
        <taxon>Pseudomonadota</taxon>
        <taxon>Alphaproteobacteria</taxon>
        <taxon>Rickettsiales</taxon>
        <taxon>Anaplasmataceae</taxon>
        <taxon>Anaplasma</taxon>
    </lineage>
</organism>
<gene>
    <name evidence="1" type="primary">ruvA</name>
    <name type="ordered locus">AMF_130</name>
</gene>
<protein>
    <recommendedName>
        <fullName evidence="1">Holliday junction branch migration complex subunit RuvA</fullName>
    </recommendedName>
</protein>
<accession>B9KHQ6</accession>
<name>RUVA_ANAMF</name>
<comment type="function">
    <text evidence="1">The RuvA-RuvB-RuvC complex processes Holliday junction (HJ) DNA during genetic recombination and DNA repair, while the RuvA-RuvB complex plays an important role in the rescue of blocked DNA replication forks via replication fork reversal (RFR). RuvA specifically binds to HJ cruciform DNA, conferring on it an open structure. The RuvB hexamer acts as an ATP-dependent pump, pulling dsDNA into and through the RuvAB complex. HJ branch migration allows RuvC to scan DNA until it finds its consensus sequence, where it cleaves and resolves the cruciform DNA.</text>
</comment>
<comment type="subunit">
    <text evidence="1">Homotetramer. Forms an RuvA(8)-RuvB(12)-Holliday junction (HJ) complex. HJ DNA is sandwiched between 2 RuvA tetramers; dsDNA enters through RuvA and exits via RuvB. An RuvB hexamer assembles on each DNA strand where it exits the tetramer. Each RuvB hexamer is contacted by two RuvA subunits (via domain III) on 2 adjacent RuvB subunits; this complex drives branch migration. In the full resolvosome a probable DNA-RuvA(4)-RuvB(12)-RuvC(2) complex forms which resolves the HJ.</text>
</comment>
<comment type="subcellular location">
    <subcellularLocation>
        <location evidence="1">Cytoplasm</location>
    </subcellularLocation>
</comment>
<comment type="domain">
    <text evidence="1">Has three domains with a flexible linker between the domains II and III and assumes an 'L' shape. Domain III is highly mobile and contacts RuvB.</text>
</comment>
<comment type="similarity">
    <text evidence="1">Belongs to the RuvA family.</text>
</comment>
<dbReference type="EMBL" id="CP001079">
    <property type="protein sequence ID" value="ACM49018.1"/>
    <property type="molecule type" value="Genomic_DNA"/>
</dbReference>
<dbReference type="RefSeq" id="WP_010267102.1">
    <property type="nucleotide sequence ID" value="NZ_AFMS01000145.1"/>
</dbReference>
<dbReference type="SMR" id="B9KHQ6"/>
<dbReference type="STRING" id="320483.AMF_130"/>
<dbReference type="GeneID" id="7398592"/>
<dbReference type="KEGG" id="amf:AMF_130"/>
<dbReference type="eggNOG" id="COG0632">
    <property type="taxonomic scope" value="Bacteria"/>
</dbReference>
<dbReference type="HOGENOM" id="CLU_087936_3_0_5"/>
<dbReference type="Proteomes" id="UP000007307">
    <property type="component" value="Chromosome"/>
</dbReference>
<dbReference type="GO" id="GO:0005737">
    <property type="term" value="C:cytoplasm"/>
    <property type="evidence" value="ECO:0007669"/>
    <property type="project" value="UniProtKB-SubCell"/>
</dbReference>
<dbReference type="GO" id="GO:0009379">
    <property type="term" value="C:Holliday junction helicase complex"/>
    <property type="evidence" value="ECO:0007669"/>
    <property type="project" value="InterPro"/>
</dbReference>
<dbReference type="GO" id="GO:0048476">
    <property type="term" value="C:Holliday junction resolvase complex"/>
    <property type="evidence" value="ECO:0007669"/>
    <property type="project" value="UniProtKB-UniRule"/>
</dbReference>
<dbReference type="GO" id="GO:0005524">
    <property type="term" value="F:ATP binding"/>
    <property type="evidence" value="ECO:0007669"/>
    <property type="project" value="InterPro"/>
</dbReference>
<dbReference type="GO" id="GO:0000400">
    <property type="term" value="F:four-way junction DNA binding"/>
    <property type="evidence" value="ECO:0007669"/>
    <property type="project" value="UniProtKB-UniRule"/>
</dbReference>
<dbReference type="GO" id="GO:0009378">
    <property type="term" value="F:four-way junction helicase activity"/>
    <property type="evidence" value="ECO:0007669"/>
    <property type="project" value="InterPro"/>
</dbReference>
<dbReference type="GO" id="GO:0006310">
    <property type="term" value="P:DNA recombination"/>
    <property type="evidence" value="ECO:0007669"/>
    <property type="project" value="UniProtKB-UniRule"/>
</dbReference>
<dbReference type="GO" id="GO:0006281">
    <property type="term" value="P:DNA repair"/>
    <property type="evidence" value="ECO:0007669"/>
    <property type="project" value="UniProtKB-UniRule"/>
</dbReference>
<dbReference type="CDD" id="cd14332">
    <property type="entry name" value="UBA_RuvA_C"/>
    <property type="match status" value="1"/>
</dbReference>
<dbReference type="Gene3D" id="1.10.150.20">
    <property type="entry name" value="5' to 3' exonuclease, C-terminal subdomain"/>
    <property type="match status" value="1"/>
</dbReference>
<dbReference type="Gene3D" id="1.10.8.10">
    <property type="entry name" value="DNA helicase RuvA subunit, C-terminal domain"/>
    <property type="match status" value="1"/>
</dbReference>
<dbReference type="Gene3D" id="2.40.50.140">
    <property type="entry name" value="Nucleic acid-binding proteins"/>
    <property type="match status" value="1"/>
</dbReference>
<dbReference type="HAMAP" id="MF_00031">
    <property type="entry name" value="DNA_HJ_migration_RuvA"/>
    <property type="match status" value="1"/>
</dbReference>
<dbReference type="InterPro" id="IPR013849">
    <property type="entry name" value="DNA_helicase_Holl-junc_RuvA_I"/>
</dbReference>
<dbReference type="InterPro" id="IPR012340">
    <property type="entry name" value="NA-bd_OB-fold"/>
</dbReference>
<dbReference type="InterPro" id="IPR000085">
    <property type="entry name" value="RuvA"/>
</dbReference>
<dbReference type="InterPro" id="IPR010994">
    <property type="entry name" value="RuvA_2-like"/>
</dbReference>
<dbReference type="InterPro" id="IPR011114">
    <property type="entry name" value="RuvA_C"/>
</dbReference>
<dbReference type="InterPro" id="IPR036267">
    <property type="entry name" value="RuvA_C_sf"/>
</dbReference>
<dbReference type="NCBIfam" id="NF011194">
    <property type="entry name" value="PRK14600.1"/>
    <property type="match status" value="1"/>
</dbReference>
<dbReference type="NCBIfam" id="TIGR00084">
    <property type="entry name" value="ruvA"/>
    <property type="match status" value="1"/>
</dbReference>
<dbReference type="Pfam" id="PF14520">
    <property type="entry name" value="HHH_5"/>
    <property type="match status" value="1"/>
</dbReference>
<dbReference type="Pfam" id="PF07499">
    <property type="entry name" value="RuvA_C"/>
    <property type="match status" value="1"/>
</dbReference>
<dbReference type="Pfam" id="PF01330">
    <property type="entry name" value="RuvA_N"/>
    <property type="match status" value="1"/>
</dbReference>
<dbReference type="SUPFAM" id="SSF46929">
    <property type="entry name" value="DNA helicase RuvA subunit, C-terminal domain"/>
    <property type="match status" value="1"/>
</dbReference>
<dbReference type="SUPFAM" id="SSF50249">
    <property type="entry name" value="Nucleic acid-binding proteins"/>
    <property type="match status" value="1"/>
</dbReference>
<dbReference type="SUPFAM" id="SSF47781">
    <property type="entry name" value="RuvA domain 2-like"/>
    <property type="match status" value="1"/>
</dbReference>
<sequence length="190" mass="20539">MIGTLSGTVEEVVCSNRIILCVGGVGYLVQLPGRVLSGCQHGDHVRLYIETYVGRDGVSQLYGFANREEQNCMRMLIKVSGVNYKTAMAILDVLTPEQVFSAIVSEDRAALKVGGVGEKLISRIISELTPQVQKFELNRFAATTRTDSEAVAALLSLGYERTAALGALQKVGVCDSTEDAVRRALLELSK</sequence>
<reference key="1">
    <citation type="journal article" date="2009" name="BMC Genomics">
        <title>Conservation in the face of diversity: multistrain analysis of an intracellular bacterium.</title>
        <authorList>
            <person name="Dark M.J."/>
            <person name="Herndon D.R."/>
            <person name="Kappmeyer L.S."/>
            <person name="Gonzales M.P."/>
            <person name="Nordeen E."/>
            <person name="Palmer G.H."/>
            <person name="Knowles D.P. Jr."/>
            <person name="Brayton K.A."/>
        </authorList>
    </citation>
    <scope>NUCLEOTIDE SEQUENCE [LARGE SCALE GENOMIC DNA]</scope>
    <source>
        <strain>Florida</strain>
    </source>
</reference>
<evidence type="ECO:0000255" key="1">
    <source>
        <dbReference type="HAMAP-Rule" id="MF_00031"/>
    </source>
</evidence>
<proteinExistence type="inferred from homology"/>
<keyword id="KW-0963">Cytoplasm</keyword>
<keyword id="KW-0227">DNA damage</keyword>
<keyword id="KW-0233">DNA recombination</keyword>
<keyword id="KW-0234">DNA repair</keyword>
<keyword id="KW-0238">DNA-binding</keyword>
<keyword id="KW-1185">Reference proteome</keyword>
<feature type="chain" id="PRO_1000195110" description="Holliday junction branch migration complex subunit RuvA">
    <location>
        <begin position="1"/>
        <end position="190"/>
    </location>
</feature>
<feature type="region of interest" description="Domain I" evidence="1">
    <location>
        <begin position="1"/>
        <end position="65"/>
    </location>
</feature>
<feature type="region of interest" description="Domain II" evidence="1">
    <location>
        <begin position="66"/>
        <end position="137"/>
    </location>
</feature>
<feature type="region of interest" description="Flexible linker" evidence="1">
    <location>
        <begin position="137"/>
        <end position="141"/>
    </location>
</feature>
<feature type="region of interest" description="Domain III" evidence="1">
    <location>
        <begin position="142"/>
        <end position="190"/>
    </location>
</feature>